<protein>
    <recommendedName>
        <fullName evidence="5">Glutathione S-transferase PARB</fullName>
        <ecNumber evidence="2">2.5.1.18</ecNumber>
    </recommendedName>
    <alternativeName>
        <fullName evidence="5">GST class-phi</fullName>
    </alternativeName>
</protein>
<sequence length="213" mass="23967">MAIKVHGSPMSTATMRVAACLIEKELDFEFVPVDMASGEHKKHPYLSLNPFGQVPAFEDGDLKLFESRAITQYIAHVYADNGYQLILQDPKKMPSMSVWMEVEGQKFEPPATKLTWELGIKPIIGMTTDDAAVKESEAQLSKVLDIYETQLAESKYLGGDSFTLVDLHHIPNIYYLMSSKVKEVFDSRPRVSAWCADILARPAWVKGLEKLQK</sequence>
<reference key="1">
    <citation type="journal article" date="1992" name="Proc. Natl. Acad. Sci. U.S.A.">
        <title>parB: an auxin-regulated gene encoding glutathione S-transferase.</title>
        <authorList>
            <person name="Takahashi Y."/>
            <person name="Nagata T."/>
        </authorList>
    </citation>
    <scope>NUCLEOTIDE SEQUENCE [MRNA]</scope>
    <scope>DEVELOPMENTAL STAGE</scope>
    <scope>INDUCTION BY AUXIN</scope>
    <source>
        <strain>cv. Xanthi NC</strain>
        <tissue>Leaf mesophyll</tissue>
    </source>
</reference>
<dbReference type="EC" id="2.5.1.18" evidence="2"/>
<dbReference type="EMBL" id="D10524">
    <property type="protein sequence ID" value="BAA01394.1"/>
    <property type="molecule type" value="mRNA"/>
</dbReference>
<dbReference type="PIR" id="A41789">
    <property type="entry name" value="A41789"/>
</dbReference>
<dbReference type="RefSeq" id="NP_001312529.1">
    <property type="nucleotide sequence ID" value="NM_001325600.1"/>
</dbReference>
<dbReference type="SMR" id="P30109"/>
<dbReference type="STRING" id="4097.P30109"/>
<dbReference type="PaxDb" id="4097-P30109"/>
<dbReference type="GeneID" id="107795177"/>
<dbReference type="KEGG" id="nta:107795177"/>
<dbReference type="OrthoDB" id="422574at2759"/>
<dbReference type="Proteomes" id="UP000084051">
    <property type="component" value="Unplaced"/>
</dbReference>
<dbReference type="GO" id="GO:0005737">
    <property type="term" value="C:cytoplasm"/>
    <property type="evidence" value="ECO:0000318"/>
    <property type="project" value="GO_Central"/>
</dbReference>
<dbReference type="GO" id="GO:0043295">
    <property type="term" value="F:glutathione binding"/>
    <property type="evidence" value="ECO:0000318"/>
    <property type="project" value="GO_Central"/>
</dbReference>
<dbReference type="GO" id="GO:0004364">
    <property type="term" value="F:glutathione transferase activity"/>
    <property type="evidence" value="ECO:0000318"/>
    <property type="project" value="GO_Central"/>
</dbReference>
<dbReference type="GO" id="GO:0006749">
    <property type="term" value="P:glutathione metabolic process"/>
    <property type="evidence" value="ECO:0000318"/>
    <property type="project" value="GO_Central"/>
</dbReference>
<dbReference type="GO" id="GO:0009407">
    <property type="term" value="P:toxin catabolic process"/>
    <property type="evidence" value="ECO:0007669"/>
    <property type="project" value="UniProtKB-ARBA"/>
</dbReference>
<dbReference type="CDD" id="cd03187">
    <property type="entry name" value="GST_C_Phi"/>
    <property type="match status" value="1"/>
</dbReference>
<dbReference type="CDD" id="cd03053">
    <property type="entry name" value="GST_N_Phi"/>
    <property type="match status" value="1"/>
</dbReference>
<dbReference type="FunFam" id="1.20.1050.10:FF:000004">
    <property type="entry name" value="Glutathione S-transferase F2"/>
    <property type="match status" value="1"/>
</dbReference>
<dbReference type="FunFam" id="3.40.30.10:FF:000016">
    <property type="entry name" value="Glutathione S-transferase F2"/>
    <property type="match status" value="1"/>
</dbReference>
<dbReference type="Gene3D" id="1.20.1050.10">
    <property type="match status" value="1"/>
</dbReference>
<dbReference type="Gene3D" id="3.40.30.10">
    <property type="entry name" value="Glutaredoxin"/>
    <property type="match status" value="1"/>
</dbReference>
<dbReference type="InterPro" id="IPR010987">
    <property type="entry name" value="Glutathione-S-Trfase_C-like"/>
</dbReference>
<dbReference type="InterPro" id="IPR036282">
    <property type="entry name" value="Glutathione-S-Trfase_C_sf"/>
</dbReference>
<dbReference type="InterPro" id="IPR040079">
    <property type="entry name" value="Glutathione_S-Trfase"/>
</dbReference>
<dbReference type="InterPro" id="IPR004045">
    <property type="entry name" value="Glutathione_S-Trfase_N"/>
</dbReference>
<dbReference type="InterPro" id="IPR004046">
    <property type="entry name" value="GST_C"/>
</dbReference>
<dbReference type="InterPro" id="IPR034347">
    <property type="entry name" value="GST_Phi_C"/>
</dbReference>
<dbReference type="InterPro" id="IPR036249">
    <property type="entry name" value="Thioredoxin-like_sf"/>
</dbReference>
<dbReference type="PANTHER" id="PTHR43900:SF47">
    <property type="entry name" value="GLUTATHIONE S-TRANSFERASE F6-RELATED"/>
    <property type="match status" value="1"/>
</dbReference>
<dbReference type="PANTHER" id="PTHR43900">
    <property type="entry name" value="GLUTATHIONE S-TRANSFERASE RHO"/>
    <property type="match status" value="1"/>
</dbReference>
<dbReference type="Pfam" id="PF00043">
    <property type="entry name" value="GST_C"/>
    <property type="match status" value="1"/>
</dbReference>
<dbReference type="Pfam" id="PF02798">
    <property type="entry name" value="GST_N"/>
    <property type="match status" value="1"/>
</dbReference>
<dbReference type="SFLD" id="SFLDS00019">
    <property type="entry name" value="Glutathione_Transferase_(cytos"/>
    <property type="match status" value="1"/>
</dbReference>
<dbReference type="SFLD" id="SFLDG01154">
    <property type="entry name" value="Main.5:_Phi-like"/>
    <property type="match status" value="1"/>
</dbReference>
<dbReference type="SUPFAM" id="SSF47616">
    <property type="entry name" value="GST C-terminal domain-like"/>
    <property type="match status" value="1"/>
</dbReference>
<dbReference type="SUPFAM" id="SSF52833">
    <property type="entry name" value="Thioredoxin-like"/>
    <property type="match status" value="1"/>
</dbReference>
<dbReference type="PROSITE" id="PS50405">
    <property type="entry name" value="GST_CTER"/>
    <property type="match status" value="1"/>
</dbReference>
<dbReference type="PROSITE" id="PS50404">
    <property type="entry name" value="GST_NTER"/>
    <property type="match status" value="1"/>
</dbReference>
<comment type="function">
    <text evidence="2">Conjugation of reduced glutathione to a wide number of exogenous and endogenous hydrophobic electrophiles.</text>
</comment>
<comment type="catalytic activity">
    <reaction evidence="2">
        <text>RX + glutathione = an S-substituted glutathione + a halide anion + H(+)</text>
        <dbReference type="Rhea" id="RHEA:16437"/>
        <dbReference type="ChEBI" id="CHEBI:15378"/>
        <dbReference type="ChEBI" id="CHEBI:16042"/>
        <dbReference type="ChEBI" id="CHEBI:17792"/>
        <dbReference type="ChEBI" id="CHEBI:57925"/>
        <dbReference type="ChEBI" id="CHEBI:90779"/>
        <dbReference type="EC" id="2.5.1.18"/>
    </reaction>
</comment>
<comment type="developmental stage">
    <text evidence="4">Its expression was observed during transition from G0 to the S phase of tobacco mesophyll protoplasts in vitro.</text>
</comment>
<comment type="induction">
    <text evidence="4">By auxin.</text>
</comment>
<comment type="similarity">
    <text evidence="6">Belongs to the GST superfamily. Phi family.</text>
</comment>
<gene>
    <name evidence="5" type="primary">PARB</name>
</gene>
<keyword id="KW-1185">Reference proteome</keyword>
<keyword id="KW-0808">Transferase</keyword>
<feature type="chain" id="PRO_0000185856" description="Glutathione S-transferase PARB">
    <location>
        <begin position="1"/>
        <end position="213"/>
    </location>
</feature>
<feature type="domain" description="GST N-terminal" evidence="3">
    <location>
        <begin position="1"/>
        <end position="82"/>
    </location>
</feature>
<feature type="domain" description="GST C-terminal" evidence="3">
    <location>
        <begin position="89"/>
        <end position="213"/>
    </location>
</feature>
<feature type="binding site" evidence="1">
    <location>
        <position position="11"/>
    </location>
    <ligand>
        <name>glutathione</name>
        <dbReference type="ChEBI" id="CHEBI:57925"/>
    </ligand>
</feature>
<feature type="binding site" evidence="2">
    <location>
        <begin position="12"/>
        <end position="13"/>
    </location>
    <ligand>
        <name>glutathione</name>
        <dbReference type="ChEBI" id="CHEBI:57925"/>
    </ligand>
</feature>
<feature type="binding site" evidence="2">
    <location>
        <begin position="40"/>
        <end position="41"/>
    </location>
    <ligand>
        <name>glutathione</name>
        <dbReference type="ChEBI" id="CHEBI:57925"/>
    </ligand>
</feature>
<feature type="binding site" evidence="2">
    <location>
        <begin position="53"/>
        <end position="54"/>
    </location>
    <ligand>
        <name>glutathione</name>
        <dbReference type="ChEBI" id="CHEBI:57925"/>
    </ligand>
</feature>
<feature type="binding site" evidence="2">
    <location>
        <begin position="66"/>
        <end position="67"/>
    </location>
    <ligand>
        <name>glutathione</name>
        <dbReference type="ChEBI" id="CHEBI:57925"/>
    </ligand>
</feature>
<accession>P30109</accession>
<proteinExistence type="evidence at transcript level"/>
<organism>
    <name type="scientific">Nicotiana tabacum</name>
    <name type="common">Common tobacco</name>
    <dbReference type="NCBI Taxonomy" id="4097"/>
    <lineage>
        <taxon>Eukaryota</taxon>
        <taxon>Viridiplantae</taxon>
        <taxon>Streptophyta</taxon>
        <taxon>Embryophyta</taxon>
        <taxon>Tracheophyta</taxon>
        <taxon>Spermatophyta</taxon>
        <taxon>Magnoliopsida</taxon>
        <taxon>eudicotyledons</taxon>
        <taxon>Gunneridae</taxon>
        <taxon>Pentapetalae</taxon>
        <taxon>asterids</taxon>
        <taxon>lamiids</taxon>
        <taxon>Solanales</taxon>
        <taxon>Solanaceae</taxon>
        <taxon>Nicotianoideae</taxon>
        <taxon>Nicotianeae</taxon>
        <taxon>Nicotiana</taxon>
    </lineage>
</organism>
<evidence type="ECO:0000250" key="1"/>
<evidence type="ECO:0000250" key="2">
    <source>
        <dbReference type="UniProtKB" id="O80852"/>
    </source>
</evidence>
<evidence type="ECO:0000255" key="3"/>
<evidence type="ECO:0000269" key="4">
    <source>
    </source>
</evidence>
<evidence type="ECO:0000303" key="5">
    <source>
    </source>
</evidence>
<evidence type="ECO:0000305" key="6"/>
<name>GSTF1_TOBAC</name>